<dbReference type="EMBL" id="FO080968">
    <property type="protein sequence ID" value="CCD68175.1"/>
    <property type="molecule type" value="Genomic_DNA"/>
</dbReference>
<dbReference type="PIR" id="T15843">
    <property type="entry name" value="T15843"/>
</dbReference>
<dbReference type="RefSeq" id="NP_495332.2">
    <property type="nucleotide sequence ID" value="NM_062931.2"/>
</dbReference>
<dbReference type="FunCoup" id="Q18881">
    <property type="interactions" value="5"/>
</dbReference>
<dbReference type="PaxDb" id="6239-C56C10.5"/>
<dbReference type="EnsemblMetazoa" id="C56C10.5.1">
    <property type="protein sequence ID" value="C56C10.5.1"/>
    <property type="gene ID" value="WBGene00005057"/>
</dbReference>
<dbReference type="GeneID" id="183858"/>
<dbReference type="KEGG" id="cel:CELE_C56C10.5"/>
<dbReference type="UCSC" id="C56C10.5">
    <property type="organism name" value="c. elegans"/>
</dbReference>
<dbReference type="AGR" id="WB:WBGene00005057"/>
<dbReference type="CTD" id="183858"/>
<dbReference type="WormBase" id="C56C10.5">
    <property type="protein sequence ID" value="CE33522"/>
    <property type="gene ID" value="WBGene00005057"/>
    <property type="gene designation" value="sra-31"/>
</dbReference>
<dbReference type="eggNOG" id="ENOG502TG4V">
    <property type="taxonomic scope" value="Eukaryota"/>
</dbReference>
<dbReference type="GeneTree" id="ENSGT00970000195862"/>
<dbReference type="HOGENOM" id="CLU_070413_0_0_1"/>
<dbReference type="InParanoid" id="Q18881"/>
<dbReference type="OMA" id="NIFPNCT"/>
<dbReference type="OrthoDB" id="5789178at2759"/>
<dbReference type="PhylomeDB" id="Q18881"/>
<dbReference type="PRO" id="PR:Q18881"/>
<dbReference type="Proteomes" id="UP000001940">
    <property type="component" value="Chromosome II"/>
</dbReference>
<dbReference type="GO" id="GO:0016020">
    <property type="term" value="C:membrane"/>
    <property type="evidence" value="ECO:0007669"/>
    <property type="project" value="UniProtKB-SubCell"/>
</dbReference>
<dbReference type="GO" id="GO:0004930">
    <property type="term" value="F:G protein-coupled receptor activity"/>
    <property type="evidence" value="ECO:0007669"/>
    <property type="project" value="InterPro"/>
</dbReference>
<dbReference type="GO" id="GO:0007606">
    <property type="term" value="P:sensory perception of chemical stimulus"/>
    <property type="evidence" value="ECO:0007669"/>
    <property type="project" value="InterPro"/>
</dbReference>
<dbReference type="InterPro" id="IPR000344">
    <property type="entry name" value="7TM_GPCR_serpentine_rcpt_Sra"/>
</dbReference>
<dbReference type="PANTHER" id="PTHR31582:SF1">
    <property type="entry name" value="SERPENTINE RECEPTOR CLASS ALPHA-28-RELATED"/>
    <property type="match status" value="1"/>
</dbReference>
<dbReference type="PANTHER" id="PTHR31582">
    <property type="entry name" value="SERPENTINE RECEPTOR, CLASS A (ALPHA)-RELATED-RELATED"/>
    <property type="match status" value="1"/>
</dbReference>
<dbReference type="Pfam" id="PF02117">
    <property type="entry name" value="7TM_GPCR_Sra"/>
    <property type="match status" value="1"/>
</dbReference>
<name>SRA31_CAEEL</name>
<organism>
    <name type="scientific">Caenorhabditis elegans</name>
    <dbReference type="NCBI Taxonomy" id="6239"/>
    <lineage>
        <taxon>Eukaryota</taxon>
        <taxon>Metazoa</taxon>
        <taxon>Ecdysozoa</taxon>
        <taxon>Nematoda</taxon>
        <taxon>Chromadorea</taxon>
        <taxon>Rhabditida</taxon>
        <taxon>Rhabditina</taxon>
        <taxon>Rhabditomorpha</taxon>
        <taxon>Rhabditoidea</taxon>
        <taxon>Rhabditidae</taxon>
        <taxon>Peloderinae</taxon>
        <taxon>Caenorhabditis</taxon>
    </lineage>
</organism>
<comment type="subcellular location">
    <subcellularLocation>
        <location evidence="2">Membrane</location>
        <topology evidence="2">Multi-pass membrane protein</topology>
    </subcellularLocation>
</comment>
<comment type="similarity">
    <text evidence="2">Belongs to the nematode receptor-like protein sra family.</text>
</comment>
<feature type="chain" id="PRO_0000104491" description="Serpentine receptor class alpha-31">
    <location>
        <begin position="1"/>
        <end position="338"/>
    </location>
</feature>
<feature type="transmembrane region" description="Helical" evidence="1">
    <location>
        <begin position="23"/>
        <end position="43"/>
    </location>
</feature>
<feature type="transmembrane region" description="Helical" evidence="1">
    <location>
        <begin position="59"/>
        <end position="79"/>
    </location>
</feature>
<feature type="transmembrane region" description="Helical" evidence="1">
    <location>
        <begin position="108"/>
        <end position="125"/>
    </location>
</feature>
<feature type="transmembrane region" description="Helical" evidence="1">
    <location>
        <begin position="142"/>
        <end position="162"/>
    </location>
</feature>
<feature type="transmembrane region" description="Helical" evidence="1">
    <location>
        <begin position="188"/>
        <end position="208"/>
    </location>
</feature>
<feature type="transmembrane region" description="Helical" evidence="1">
    <location>
        <begin position="240"/>
        <end position="260"/>
    </location>
</feature>
<feature type="transmembrane region" description="Helical" evidence="1">
    <location>
        <begin position="276"/>
        <end position="296"/>
    </location>
</feature>
<accession>Q18881</accession>
<keyword id="KW-0472">Membrane</keyword>
<keyword id="KW-1185">Reference proteome</keyword>
<keyword id="KW-0812">Transmembrane</keyword>
<keyword id="KW-1133">Transmembrane helix</keyword>
<sequence length="338" mass="38898">MEIPGKCTSEEIRLTLTSSFMMGNHCFILLIIISSVFLTVFAIRKLWKNNIFPNCTRTLLFSAIINGVVHHWSIAGIRIRTVYRALVYGSDRCSILFQSSECLIESNLYYYTNLFSSLCCISLFFDRLLSLNAKTSYNTKHFSKIFLLFQSISPFGILYWIFYDSVYTGFVPMCSYPPATSSLKFHKVNEFRLYILGTFFVLSFVIFFYNRTQEKGIIHNVYDTESRYKSYENLLATRAVCIIIATQITCLVTTASTTEILSAYKSSIPNTILLPSIAFMTGLTYSNFFLPIIIIYQTNRIINQRYNAIKRIQNEKSFATHFASLDLSWKSSKIDNSS</sequence>
<gene>
    <name type="primary">sra-31</name>
    <name type="ORF">C56C10.5</name>
</gene>
<proteinExistence type="inferred from homology"/>
<protein>
    <recommendedName>
        <fullName>Serpentine receptor class alpha-31</fullName>
        <shortName>Protein sra-31</shortName>
    </recommendedName>
</protein>
<evidence type="ECO:0000255" key="1"/>
<evidence type="ECO:0000305" key="2"/>
<reference key="1">
    <citation type="journal article" date="1998" name="Science">
        <title>Genome sequence of the nematode C. elegans: a platform for investigating biology.</title>
        <authorList>
            <consortium name="The C. elegans sequencing consortium"/>
        </authorList>
    </citation>
    <scope>NUCLEOTIDE SEQUENCE [LARGE SCALE GENOMIC DNA]</scope>
    <source>
        <strain>Bristol N2</strain>
    </source>
</reference>